<organism>
    <name type="scientific">Homo sapiens</name>
    <name type="common">Human</name>
    <dbReference type="NCBI Taxonomy" id="9606"/>
    <lineage>
        <taxon>Eukaryota</taxon>
        <taxon>Metazoa</taxon>
        <taxon>Chordata</taxon>
        <taxon>Craniata</taxon>
        <taxon>Vertebrata</taxon>
        <taxon>Euteleostomi</taxon>
        <taxon>Mammalia</taxon>
        <taxon>Eutheria</taxon>
        <taxon>Euarchontoglires</taxon>
        <taxon>Primates</taxon>
        <taxon>Haplorrhini</taxon>
        <taxon>Catarrhini</taxon>
        <taxon>Hominidae</taxon>
        <taxon>Homo</taxon>
    </lineage>
</organism>
<proteinExistence type="evidence at protein level"/>
<keyword id="KW-0025">Alternative splicing</keyword>
<keyword id="KW-0217">Developmental protein</keyword>
<keyword id="KW-0225">Disease variant</keyword>
<keyword id="KW-0238">DNA-binding</keyword>
<keyword id="KW-0371">Homeobox</keyword>
<keyword id="KW-1013">Microphthalmia</keyword>
<keyword id="KW-0539">Nucleus</keyword>
<keyword id="KW-1267">Proteomics identification</keyword>
<keyword id="KW-1185">Reference proteome</keyword>
<name>OTX2_HUMAN</name>
<protein>
    <recommendedName>
        <fullName>Homeobox protein OTX2</fullName>
    </recommendedName>
    <alternativeName>
        <fullName>Orthodenticle homolog 2</fullName>
    </alternativeName>
</protein>
<accession>P32243</accession>
<accession>B2RAN5</accession>
<accession>Q6GTV3</accession>
<accession>Q9HAW3</accession>
<accession>Q9P2R1</accession>
<reference key="1">
    <citation type="journal article" date="1993" name="EMBO J.">
        <title>A vertebrate gene related to orthodenticle contains a homeodomain of the bicoid class and demarcates anterior neuroectoderm in the gastrulating mouse embryo.</title>
        <authorList>
            <person name="Simeone A."/>
            <person name="Acampora D."/>
            <person name="Mallamaci A."/>
            <person name="Stornaiuolo A."/>
            <person name="D'Apice M.R."/>
            <person name="Nigro V."/>
            <person name="Boncinelli E."/>
        </authorList>
    </citation>
    <scope>NUCLEOTIDE SEQUENCE [MRNA] (ISOFORM 2)</scope>
</reference>
<reference key="2">
    <citation type="submission" date="2000-08" db="EMBL/GenBank/DDBJ databases">
        <authorList>
            <person name="Perrault I."/>
            <person name="Rozet J.-M."/>
            <person name="Gerber S."/>
            <person name="Munnich A."/>
            <person name="Kaplan J."/>
        </authorList>
    </citation>
    <scope>NUCLEOTIDE SEQUENCE [GENOMIC DNA]</scope>
</reference>
<reference key="3">
    <citation type="journal article" date="1999" name="Curr. Eye Res.">
        <title>Elements regulating the transcription of human interstitial retinoid-binding protein (IRBP) gene in cultured retinoblastoma cells.</title>
        <authorList>
            <person name="Fong S.L."/>
            <person name="Fong W.B."/>
        </authorList>
    </citation>
    <scope>NUCLEOTIDE SEQUENCE [MRNA] (ISOFORM 1)</scope>
    <source>
        <tissue>Retina</tissue>
    </source>
</reference>
<reference key="4">
    <citation type="journal article" date="2004" name="Nat. Genet.">
        <title>Complete sequencing and characterization of 21,243 full-length human cDNAs.</title>
        <authorList>
            <person name="Ota T."/>
            <person name="Suzuki Y."/>
            <person name="Nishikawa T."/>
            <person name="Otsuki T."/>
            <person name="Sugiyama T."/>
            <person name="Irie R."/>
            <person name="Wakamatsu A."/>
            <person name="Hayashi K."/>
            <person name="Sato H."/>
            <person name="Nagai K."/>
            <person name="Kimura K."/>
            <person name="Makita H."/>
            <person name="Sekine M."/>
            <person name="Obayashi M."/>
            <person name="Nishi T."/>
            <person name="Shibahara T."/>
            <person name="Tanaka T."/>
            <person name="Ishii S."/>
            <person name="Yamamoto J."/>
            <person name="Saito K."/>
            <person name="Kawai Y."/>
            <person name="Isono Y."/>
            <person name="Nakamura Y."/>
            <person name="Nagahari K."/>
            <person name="Murakami K."/>
            <person name="Yasuda T."/>
            <person name="Iwayanagi T."/>
            <person name="Wagatsuma M."/>
            <person name="Shiratori A."/>
            <person name="Sudo H."/>
            <person name="Hosoiri T."/>
            <person name="Kaku Y."/>
            <person name="Kodaira H."/>
            <person name="Kondo H."/>
            <person name="Sugawara M."/>
            <person name="Takahashi M."/>
            <person name="Kanda K."/>
            <person name="Yokoi T."/>
            <person name="Furuya T."/>
            <person name="Kikkawa E."/>
            <person name="Omura Y."/>
            <person name="Abe K."/>
            <person name="Kamihara K."/>
            <person name="Katsuta N."/>
            <person name="Sato K."/>
            <person name="Tanikawa M."/>
            <person name="Yamazaki M."/>
            <person name="Ninomiya K."/>
            <person name="Ishibashi T."/>
            <person name="Yamashita H."/>
            <person name="Murakawa K."/>
            <person name="Fujimori K."/>
            <person name="Tanai H."/>
            <person name="Kimata M."/>
            <person name="Watanabe M."/>
            <person name="Hiraoka S."/>
            <person name="Chiba Y."/>
            <person name="Ishida S."/>
            <person name="Ono Y."/>
            <person name="Takiguchi S."/>
            <person name="Watanabe S."/>
            <person name="Yosida M."/>
            <person name="Hotuta T."/>
            <person name="Kusano J."/>
            <person name="Kanehori K."/>
            <person name="Takahashi-Fujii A."/>
            <person name="Hara H."/>
            <person name="Tanase T.-O."/>
            <person name="Nomura Y."/>
            <person name="Togiya S."/>
            <person name="Komai F."/>
            <person name="Hara R."/>
            <person name="Takeuchi K."/>
            <person name="Arita M."/>
            <person name="Imose N."/>
            <person name="Musashino K."/>
            <person name="Yuuki H."/>
            <person name="Oshima A."/>
            <person name="Sasaki N."/>
            <person name="Aotsuka S."/>
            <person name="Yoshikawa Y."/>
            <person name="Matsunawa H."/>
            <person name="Ichihara T."/>
            <person name="Shiohata N."/>
            <person name="Sano S."/>
            <person name="Moriya S."/>
            <person name="Momiyama H."/>
            <person name="Satoh N."/>
            <person name="Takami S."/>
            <person name="Terashima Y."/>
            <person name="Suzuki O."/>
            <person name="Nakagawa S."/>
            <person name="Senoh A."/>
            <person name="Mizoguchi H."/>
            <person name="Goto Y."/>
            <person name="Shimizu F."/>
            <person name="Wakebe H."/>
            <person name="Hishigaki H."/>
            <person name="Watanabe T."/>
            <person name="Sugiyama A."/>
            <person name="Takemoto M."/>
            <person name="Kawakami B."/>
            <person name="Yamazaki M."/>
            <person name="Watanabe K."/>
            <person name="Kumagai A."/>
            <person name="Itakura S."/>
            <person name="Fukuzumi Y."/>
            <person name="Fujimori Y."/>
            <person name="Komiyama M."/>
            <person name="Tashiro H."/>
            <person name="Tanigami A."/>
            <person name="Fujiwara T."/>
            <person name="Ono T."/>
            <person name="Yamada K."/>
            <person name="Fujii Y."/>
            <person name="Ozaki K."/>
            <person name="Hirao M."/>
            <person name="Ohmori Y."/>
            <person name="Kawabata A."/>
            <person name="Hikiji T."/>
            <person name="Kobatake N."/>
            <person name="Inagaki H."/>
            <person name="Ikema Y."/>
            <person name="Okamoto S."/>
            <person name="Okitani R."/>
            <person name="Kawakami T."/>
            <person name="Noguchi S."/>
            <person name="Itoh T."/>
            <person name="Shigeta K."/>
            <person name="Senba T."/>
            <person name="Matsumura K."/>
            <person name="Nakajima Y."/>
            <person name="Mizuno T."/>
            <person name="Morinaga M."/>
            <person name="Sasaki M."/>
            <person name="Togashi T."/>
            <person name="Oyama M."/>
            <person name="Hata H."/>
            <person name="Watanabe M."/>
            <person name="Komatsu T."/>
            <person name="Mizushima-Sugano J."/>
            <person name="Satoh T."/>
            <person name="Shirai Y."/>
            <person name="Takahashi Y."/>
            <person name="Nakagawa K."/>
            <person name="Okumura K."/>
            <person name="Nagase T."/>
            <person name="Nomura N."/>
            <person name="Kikuchi H."/>
            <person name="Masuho Y."/>
            <person name="Yamashita R."/>
            <person name="Nakai K."/>
            <person name="Yada T."/>
            <person name="Nakamura Y."/>
            <person name="Ohara O."/>
            <person name="Isogai T."/>
            <person name="Sugano S."/>
        </authorList>
    </citation>
    <scope>NUCLEOTIDE SEQUENCE [LARGE SCALE MRNA] (ISOFORM 1)</scope>
    <source>
        <tissue>Cerebellum</tissue>
    </source>
</reference>
<reference key="5">
    <citation type="submission" date="2005-07" db="EMBL/GenBank/DDBJ databases">
        <authorList>
            <person name="Mural R.J."/>
            <person name="Istrail S."/>
            <person name="Sutton G.G."/>
            <person name="Florea L."/>
            <person name="Halpern A.L."/>
            <person name="Mobarry C.M."/>
            <person name="Lippert R."/>
            <person name="Walenz B."/>
            <person name="Shatkay H."/>
            <person name="Dew I."/>
            <person name="Miller J.R."/>
            <person name="Flanigan M.J."/>
            <person name="Edwards N.J."/>
            <person name="Bolanos R."/>
            <person name="Fasulo D."/>
            <person name="Halldorsson B.V."/>
            <person name="Hannenhalli S."/>
            <person name="Turner R."/>
            <person name="Yooseph S."/>
            <person name="Lu F."/>
            <person name="Nusskern D.R."/>
            <person name="Shue B.C."/>
            <person name="Zheng X.H."/>
            <person name="Zhong F."/>
            <person name="Delcher A.L."/>
            <person name="Huson D.H."/>
            <person name="Kravitz S.A."/>
            <person name="Mouchard L."/>
            <person name="Reinert K."/>
            <person name="Remington K.A."/>
            <person name="Clark A.G."/>
            <person name="Waterman M.S."/>
            <person name="Eichler E.E."/>
            <person name="Adams M.D."/>
            <person name="Hunkapiller M.W."/>
            <person name="Myers E.W."/>
            <person name="Venter J.C."/>
        </authorList>
    </citation>
    <scope>NUCLEOTIDE SEQUENCE [LARGE SCALE GENOMIC DNA]</scope>
</reference>
<reference key="6">
    <citation type="journal article" date="2004" name="Genome Res.">
        <title>The status, quality, and expansion of the NIH full-length cDNA project: the Mammalian Gene Collection (MGC).</title>
        <authorList>
            <consortium name="The MGC Project Team"/>
        </authorList>
    </citation>
    <scope>NUCLEOTIDE SEQUENCE [LARGE SCALE MRNA] (ISOFORM 2)</scope>
    <source>
        <tissue>Eye</tissue>
    </source>
</reference>
<reference key="7">
    <citation type="submission" date="2000-01" db="EMBL/GenBank/DDBJ databases">
        <authorList>
            <person name="Kitano T."/>
            <person name="Kobayakawa H."/>
            <person name="Saitou N."/>
        </authorList>
    </citation>
    <scope>NUCLEOTIDE SEQUENCE [GENOMIC DNA] OF 171-283</scope>
</reference>
<reference key="8">
    <citation type="journal article" date="2005" name="Am. J. Hum. Genet.">
        <title>Heterozygous mutations of OTX2 cause severe ocular malformations.</title>
        <authorList>
            <person name="Ragge N.K."/>
            <person name="Brown A.G."/>
            <person name="Poloschek C.M."/>
            <person name="Lorenz B."/>
            <person name="Henderson R.A."/>
            <person name="Clarke M.P."/>
            <person name="Russell-Eggitt I."/>
            <person name="Fielder A."/>
            <person name="Gerrelli D."/>
            <person name="Martinez-Barbera J.P."/>
            <person name="Ruddle P."/>
            <person name="Hurst J."/>
            <person name="Collin J.R."/>
            <person name="Salt A."/>
            <person name="Cooper S.T."/>
            <person name="Thompson P.J."/>
            <person name="Sisodiya S.M."/>
            <person name="Williamson K.A."/>
            <person name="Fitzpatrick D.R."/>
            <person name="van Heyningen V."/>
            <person name="Hanson I.M."/>
        </authorList>
    </citation>
    <scope>VARIANTS MCOPS5 GLY-89; THR-133 AND ALA-134</scope>
    <scope>DEVELOPMENTAL STAGE</scope>
</reference>
<reference key="9">
    <citation type="journal article" date="2005" name="Am. J. Hum. Genet.">
        <authorList>
            <person name="Ragge N.K."/>
            <person name="Brown A.G."/>
            <person name="Poloschek C.M."/>
            <person name="Lorenz B."/>
            <person name="Henderson R.A."/>
            <person name="Clarke M.P."/>
            <person name="Russell-Eggitt I."/>
            <person name="Fielder A."/>
            <person name="Gerrelli D."/>
            <person name="Martinez-Barbera J.P."/>
            <person name="Ruddle P."/>
            <person name="Hurst J."/>
            <person name="Collin J.R."/>
            <person name="Salt A."/>
            <person name="Cooper S.T."/>
            <person name="Thompson P.J."/>
            <person name="Sisodiya S.M."/>
            <person name="Williamson K.A."/>
            <person name="Fitzpatrick D.R."/>
            <person name="van Heyningen V."/>
            <person name="Hanson I.M."/>
        </authorList>
    </citation>
    <scope>ERRATUM OF PUBMED:15846561</scope>
</reference>
<reference key="10">
    <citation type="journal article" date="2009" name="Int. J. Dev. Neurosci.">
        <title>Expression of the homeobox genes PAX6, OTX2, and OTX1 in the early human fetal retina.</title>
        <authorList>
            <person name="Larsen K.B."/>
            <person name="Lutterodt M."/>
            <person name="Rath M.F."/>
            <person name="Moeller M."/>
        </authorList>
    </citation>
    <scope>DEVELOPMENTAL STAGE</scope>
    <scope>SUBCELLULAR LOCATION</scope>
</reference>
<reference key="11">
    <citation type="journal article" date="2009" name="Mol. Vis.">
        <title>A rare de novo nonsense mutation in OTX2 causes early onset retinal dystrophy and pituitary dysfunction.</title>
        <authorList>
            <person name="Henderson R.H."/>
            <person name="Williamson K.A."/>
            <person name="Kennedy J.S."/>
            <person name="Webster A.R."/>
            <person name="Holder G.E."/>
            <person name="Robson A.G."/>
            <person name="FitzPatrick D.R."/>
            <person name="van Heyningen V."/>
            <person name="Moore A.T."/>
        </authorList>
    </citation>
    <scope>INVOLVEMENT IN RDEOP</scope>
</reference>
<reference key="12">
    <citation type="journal article" date="2012" name="J. Med. Genet.">
        <title>OTX2 mutations contribute to the otocephaly-dysgnathia complex.</title>
        <authorList>
            <person name="Chassaing N."/>
            <person name="Sorrentino S."/>
            <person name="Davis E.E."/>
            <person name="Martin-Coignard D."/>
            <person name="Iacovelli A."/>
            <person name="Paznekas W."/>
            <person name="Webb B.D."/>
            <person name="Faye-Petersen O."/>
            <person name="Encha-Razavi F."/>
            <person name="Lequeux L."/>
            <person name="Vigouroux A."/>
            <person name="Yesilyurt A."/>
            <person name="Boyadjiev S.A."/>
            <person name="Kayserili H."/>
            <person name="Loget P."/>
            <person name="Carles D."/>
            <person name="Sergi C."/>
            <person name="Puvabanditsin S."/>
            <person name="Chen C.P."/>
            <person name="Etchevers H.C."/>
            <person name="Katsanis N."/>
            <person name="Mercer C.L."/>
            <person name="Calvas P."/>
            <person name="Jabs E.W."/>
        </authorList>
    </citation>
    <scope>INVOLVEMENT IN MCOPS5</scope>
</reference>
<reference key="13">
    <citation type="journal article" date="2013" name="Mol. Syndromol.">
        <title>Otocephaly-Dysgnathia Complex: Description of Four Cases and Confirmation of the Role of OTX2.</title>
        <authorList>
            <person name="Patat O."/>
            <person name="van Ravenswaaij-Arts C.M."/>
            <person name="Tantau J."/>
            <person name="Corsten-Janssen N."/>
            <person name="van Tintelen J.P."/>
            <person name="Dijkhuizen T."/>
            <person name="Kaplan J."/>
            <person name="Chassaing N."/>
        </authorList>
    </citation>
    <scope>INVOLVEMENT IN MCOPS5</scope>
</reference>
<reference key="14">
    <citation type="journal article" date="2014" name="J. Med. Genet.">
        <title>OTX2 mutations cause autosomal dominant pattern dystrophy of the retinal pigment epithelium.</title>
        <authorList>
            <consortium name="FORGE Canada Consortium"/>
            <person name="Vincent A."/>
            <person name="Forster N."/>
            <person name="Maynes J.T."/>
            <person name="Paton T.A."/>
            <person name="Billingsley G."/>
            <person name="Roslin N.M."/>
            <person name="Ali A."/>
            <person name="Sutherland J."/>
            <person name="Wright T."/>
            <person name="Westall C.A."/>
            <person name="Paterson A.D."/>
            <person name="Marshall C.R."/>
            <person name="Heon E."/>
        </authorList>
    </citation>
    <scope>INVOLVEMENT IN RDEOP</scope>
    <scope>VARIANT RDEOP LYS-79</scope>
</reference>
<reference key="15">
    <citation type="journal article" date="2008" name="J. Clin. Endocrinol. Metab.">
        <title>A novel dominant negative mutation of OTX2 associated with combined pituitary hormone deficiency.</title>
        <authorList>
            <person name="Diaczok D."/>
            <person name="Romero C."/>
            <person name="Zunich J."/>
            <person name="Marshall I."/>
            <person name="Radovick S."/>
        </authorList>
    </citation>
    <scope>VARIANT CPHD6 SER-225</scope>
    <scope>CHARACTERIZATION OF VARIANT CPHD6 SER-225</scope>
</reference>
<reference key="16">
    <citation type="journal article" date="2010" name="Hum. Genet.">
        <title>A novel loss-of-function mutation in OTX2 in a patient with anophthalmia and isolated growth hormone deficiency.</title>
        <authorList>
            <person name="Ashkenazi-Hoffnung L."/>
            <person name="Lebenthal Y."/>
            <person name="Wyatt A.W."/>
            <person name="Ragge N.K."/>
            <person name="Dateki S."/>
            <person name="Fukami M."/>
            <person name="Ogata T."/>
            <person name="Phillip M."/>
            <person name="Gat-Yablonski G."/>
        </authorList>
    </citation>
    <scope>VARIANT MCOPS5 SER-90</scope>
    <scope>CHARACTERIZATION OF VARIANT MCOPS5 SER-90</scope>
</reference>
<reference key="17">
    <citation type="journal article" date="2012" name="Eur. J. Endocrinol.">
        <title>A novel OTX2 mutation in a patient with combined pituitary hormone deficiency, pituitary malformation, and an underdeveloped left optic nerve.</title>
        <authorList>
            <person name="Gorbenko Del Blanco D."/>
            <person name="Romero C.J."/>
            <person name="Diaczok D."/>
            <person name="de Graaff L.C."/>
            <person name="Radovick S."/>
            <person name="Hokken-Koelega A.C."/>
        </authorList>
    </citation>
    <scope>VARIANT CPHD6 ARG-134</scope>
    <scope>FUNCTION</scope>
</reference>
<dbReference type="EMBL" id="AF298117">
    <property type="protein sequence ID" value="AAG16243.1"/>
    <property type="molecule type" value="Genomic_DNA"/>
</dbReference>
<dbReference type="EMBL" id="AF093138">
    <property type="protein sequence ID" value="AAD31385.1"/>
    <property type="molecule type" value="mRNA"/>
</dbReference>
<dbReference type="EMBL" id="AK314271">
    <property type="protein sequence ID" value="BAG36932.1"/>
    <property type="molecule type" value="mRNA"/>
</dbReference>
<dbReference type="EMBL" id="CH471061">
    <property type="protein sequence ID" value="EAW80692.1"/>
    <property type="molecule type" value="Genomic_DNA"/>
</dbReference>
<dbReference type="EMBL" id="BC032579">
    <property type="protein sequence ID" value="AAH32579.1"/>
    <property type="molecule type" value="mRNA"/>
</dbReference>
<dbReference type="EMBL" id="AB037505">
    <property type="protein sequence ID" value="BAA90425.1"/>
    <property type="molecule type" value="Genomic_DNA"/>
</dbReference>
<dbReference type="CCDS" id="CCDS41960.1">
    <molecule id="P32243-1"/>
</dbReference>
<dbReference type="CCDS" id="CCDS9728.1">
    <molecule id="P32243-2"/>
</dbReference>
<dbReference type="RefSeq" id="NP_001257452.1">
    <molecule id="P32243-1"/>
    <property type="nucleotide sequence ID" value="NM_001270523.2"/>
</dbReference>
<dbReference type="RefSeq" id="NP_001257453.1">
    <molecule id="P32243-1"/>
    <property type="nucleotide sequence ID" value="NM_001270524.2"/>
</dbReference>
<dbReference type="RefSeq" id="NP_001257454.1">
    <molecule id="P32243-2"/>
    <property type="nucleotide sequence ID" value="NM_001270525.2"/>
</dbReference>
<dbReference type="RefSeq" id="NP_068374.1">
    <molecule id="P32243-2"/>
    <property type="nucleotide sequence ID" value="NM_021728.4"/>
</dbReference>
<dbReference type="RefSeq" id="NP_758840.1">
    <molecule id="P32243-1"/>
    <property type="nucleotide sequence ID" value="NM_172337.3"/>
</dbReference>
<dbReference type="BMRB" id="P32243"/>
<dbReference type="SMR" id="P32243"/>
<dbReference type="BioGRID" id="111055">
    <property type="interactions" value="69"/>
</dbReference>
<dbReference type="FunCoup" id="P32243">
    <property type="interactions" value="222"/>
</dbReference>
<dbReference type="IntAct" id="P32243">
    <property type="interactions" value="47"/>
</dbReference>
<dbReference type="MINT" id="P32243"/>
<dbReference type="STRING" id="9606.ENSP00000500595"/>
<dbReference type="MoonDB" id="P32243">
    <property type="type" value="Predicted"/>
</dbReference>
<dbReference type="GlyGen" id="P32243">
    <property type="glycosylation" value="3 sites, 1 O-linked glycan (3 sites)"/>
</dbReference>
<dbReference type="iPTMnet" id="P32243"/>
<dbReference type="PhosphoSitePlus" id="P32243"/>
<dbReference type="BioMuta" id="OTX2"/>
<dbReference type="jPOST" id="P32243"/>
<dbReference type="MassIVE" id="P32243"/>
<dbReference type="PaxDb" id="9606-ENSP00000343819"/>
<dbReference type="PeptideAtlas" id="P32243"/>
<dbReference type="ProteomicsDB" id="54851">
    <molecule id="P32243-1"/>
</dbReference>
<dbReference type="ProteomicsDB" id="54852">
    <molecule id="P32243-2"/>
</dbReference>
<dbReference type="Antibodypedia" id="49">
    <property type="antibodies" value="441 antibodies from 38 providers"/>
</dbReference>
<dbReference type="DNASU" id="5015"/>
<dbReference type="Ensembl" id="ENST00000339475.10">
    <molecule id="P32243-1"/>
    <property type="protein sequence ID" value="ENSP00000343819.5"/>
    <property type="gene ID" value="ENSG00000165588.19"/>
</dbReference>
<dbReference type="Ensembl" id="ENST00000408990.8">
    <molecule id="P32243-1"/>
    <property type="protein sequence ID" value="ENSP00000386185.3"/>
    <property type="gene ID" value="ENSG00000165588.19"/>
</dbReference>
<dbReference type="Ensembl" id="ENST00000554845.2">
    <molecule id="P32243-2"/>
    <property type="protein sequence ID" value="ENSP00000451357.2"/>
    <property type="gene ID" value="ENSG00000165588.19"/>
</dbReference>
<dbReference type="Ensembl" id="ENST00000555006.5">
    <molecule id="P32243-1"/>
    <property type="protein sequence ID" value="ENSP00000452336.1"/>
    <property type="gene ID" value="ENSG00000165588.19"/>
</dbReference>
<dbReference type="Ensembl" id="ENST00000555804.2">
    <molecule id="P32243-1"/>
    <property type="protein sequence ID" value="ENSP00000451272.2"/>
    <property type="gene ID" value="ENSG00000165588.19"/>
</dbReference>
<dbReference type="Ensembl" id="ENST00000672264.2">
    <molecule id="P32243-2"/>
    <property type="protein sequence ID" value="ENSP00000500115.1"/>
    <property type="gene ID" value="ENSG00000165588.19"/>
</dbReference>
<dbReference type="Ensembl" id="ENST00000673035.1">
    <molecule id="P32243-1"/>
    <property type="protein sequence ID" value="ENSP00000500061.1"/>
    <property type="gene ID" value="ENSG00000165588.19"/>
</dbReference>
<dbReference type="Ensembl" id="ENST00000673481.1">
    <molecule id="P32243-2"/>
    <property type="protein sequence ID" value="ENSP00000500595.1"/>
    <property type="gene ID" value="ENSG00000165588.19"/>
</dbReference>
<dbReference type="Ensembl" id="ENST00000685244.1">
    <molecule id="P32243-1"/>
    <property type="protein sequence ID" value="ENSP00000508798.1"/>
    <property type="gene ID" value="ENSG00000165588.19"/>
</dbReference>
<dbReference type="GeneID" id="5015"/>
<dbReference type="KEGG" id="hsa:5015"/>
<dbReference type="MANE-Select" id="ENST00000672264.2">
    <molecule id="P32243-2"/>
    <property type="protein sequence ID" value="ENSP00000500115.1"/>
    <property type="RefSeq nucleotide sequence ID" value="NM_021728.4"/>
    <property type="RefSeq protein sequence ID" value="NP_068374.1"/>
</dbReference>
<dbReference type="UCSC" id="uc001xcp.5">
    <molecule id="P32243-1"/>
    <property type="organism name" value="human"/>
</dbReference>
<dbReference type="AGR" id="HGNC:8522"/>
<dbReference type="CTD" id="5015"/>
<dbReference type="DisGeNET" id="5015"/>
<dbReference type="GeneCards" id="OTX2"/>
<dbReference type="HGNC" id="HGNC:8522">
    <property type="gene designation" value="OTX2"/>
</dbReference>
<dbReference type="HPA" id="ENSG00000165588">
    <property type="expression patterns" value="Group enriched (choroid plexus, retina)"/>
</dbReference>
<dbReference type="MalaCards" id="OTX2"/>
<dbReference type="MIM" id="600037">
    <property type="type" value="gene"/>
</dbReference>
<dbReference type="MIM" id="610125">
    <property type="type" value="phenotype"/>
</dbReference>
<dbReference type="MIM" id="613986">
    <property type="type" value="phenotype"/>
</dbReference>
<dbReference type="neXtProt" id="NX_P32243"/>
<dbReference type="OpenTargets" id="ENSG00000165588"/>
<dbReference type="Orphanet" id="990">
    <property type="disease" value="Agnathia-holoprosencephaly-situs inversus syndrome"/>
</dbReference>
<dbReference type="Orphanet" id="99001">
    <property type="disease" value="Butterfly-shaped pigment dystrophy"/>
</dbReference>
<dbReference type="Orphanet" id="98938">
    <property type="disease" value="Colobomatous microphthalmia"/>
</dbReference>
<dbReference type="Orphanet" id="95494">
    <property type="disease" value="Combined pituitary hormone deficiencies, genetic forms"/>
</dbReference>
<dbReference type="Orphanet" id="35612">
    <property type="disease" value="Nanophthalmos"/>
</dbReference>
<dbReference type="Orphanet" id="3157">
    <property type="disease" value="Septo-optic dysplasia spectrum"/>
</dbReference>
<dbReference type="Orphanet" id="178364">
    <property type="disease" value="Syndromic microphthalmia type 5"/>
</dbReference>
<dbReference type="PharmGKB" id="PA32849"/>
<dbReference type="VEuPathDB" id="HostDB:ENSG00000165588"/>
<dbReference type="eggNOG" id="KOG2251">
    <property type="taxonomic scope" value="Eukaryota"/>
</dbReference>
<dbReference type="GeneTree" id="ENSGT00940000155014"/>
<dbReference type="HOGENOM" id="CLU_064370_0_0_1"/>
<dbReference type="InParanoid" id="P32243"/>
<dbReference type="OMA" id="QTNISMM"/>
<dbReference type="OrthoDB" id="6159439at2759"/>
<dbReference type="PAN-GO" id="P32243">
    <property type="GO annotations" value="4 GO annotations based on evolutionary models"/>
</dbReference>
<dbReference type="PhylomeDB" id="P32243"/>
<dbReference type="TreeFam" id="TF351179"/>
<dbReference type="PathwayCommons" id="P32243"/>
<dbReference type="Reactome" id="R-HSA-9823739">
    <property type="pathway name" value="Formation of the anterior neural plate"/>
</dbReference>
<dbReference type="Reactome" id="R-HSA-9832991">
    <property type="pathway name" value="Formation of the posterior neural plate"/>
</dbReference>
<dbReference type="SignaLink" id="P32243"/>
<dbReference type="SIGNOR" id="P32243"/>
<dbReference type="BioGRID-ORCS" id="5015">
    <property type="hits" value="25 hits in 1170 CRISPR screens"/>
</dbReference>
<dbReference type="GeneWiki" id="Orthodenticle_homeobox_2"/>
<dbReference type="GenomeRNAi" id="5015"/>
<dbReference type="Pharos" id="P32243">
    <property type="development level" value="Tbio"/>
</dbReference>
<dbReference type="PRO" id="PR:P32243"/>
<dbReference type="Proteomes" id="UP000005640">
    <property type="component" value="Chromosome 14"/>
</dbReference>
<dbReference type="RNAct" id="P32243">
    <property type="molecule type" value="protein"/>
</dbReference>
<dbReference type="Bgee" id="ENSG00000165588">
    <property type="expression patterns" value="Expressed in secondary oocyte and 48 other cell types or tissues"/>
</dbReference>
<dbReference type="ExpressionAtlas" id="P32243">
    <property type="expression patterns" value="baseline and differential"/>
</dbReference>
<dbReference type="GO" id="GO:0000785">
    <property type="term" value="C:chromatin"/>
    <property type="evidence" value="ECO:0000247"/>
    <property type="project" value="NTNU_SB"/>
</dbReference>
<dbReference type="GO" id="GO:0030426">
    <property type="term" value="C:growth cone"/>
    <property type="evidence" value="ECO:0000314"/>
    <property type="project" value="UniProtKB"/>
</dbReference>
<dbReference type="GO" id="GO:0005634">
    <property type="term" value="C:nucleus"/>
    <property type="evidence" value="ECO:0000314"/>
    <property type="project" value="ParkinsonsUK-UCL"/>
</dbReference>
<dbReference type="GO" id="GO:0032991">
    <property type="term" value="C:protein-containing complex"/>
    <property type="evidence" value="ECO:0000314"/>
    <property type="project" value="UniProtKB"/>
</dbReference>
<dbReference type="GO" id="GO:0001228">
    <property type="term" value="F:DNA-binding transcription activator activity, RNA polymerase II-specific"/>
    <property type="evidence" value="ECO:0000314"/>
    <property type="project" value="UniProtKB"/>
</dbReference>
<dbReference type="GO" id="GO:0000981">
    <property type="term" value="F:DNA-binding transcription factor activity, RNA polymerase II-specific"/>
    <property type="evidence" value="ECO:0000247"/>
    <property type="project" value="NTNU_SB"/>
</dbReference>
<dbReference type="GO" id="GO:0008190">
    <property type="term" value="F:eukaryotic initiation factor 4E binding"/>
    <property type="evidence" value="ECO:0000304"/>
    <property type="project" value="UniProtKB"/>
</dbReference>
<dbReference type="GO" id="GO:0000978">
    <property type="term" value="F:RNA polymerase II cis-regulatory region sequence-specific DNA binding"/>
    <property type="evidence" value="ECO:0000314"/>
    <property type="project" value="NTNU_SB"/>
</dbReference>
<dbReference type="GO" id="GO:1990837">
    <property type="term" value="F:sequence-specific double-stranded DNA binding"/>
    <property type="evidence" value="ECO:0000314"/>
    <property type="project" value="ARUK-UCL"/>
</dbReference>
<dbReference type="GO" id="GO:0007411">
    <property type="term" value="P:axon guidance"/>
    <property type="evidence" value="ECO:0000314"/>
    <property type="project" value="UniProtKB"/>
</dbReference>
<dbReference type="GO" id="GO:0071542">
    <property type="term" value="P:dopaminergic neuron differentiation"/>
    <property type="evidence" value="ECO:0000316"/>
    <property type="project" value="ParkinsonsUK-UCL"/>
</dbReference>
<dbReference type="GO" id="GO:0030900">
    <property type="term" value="P:forebrain development"/>
    <property type="evidence" value="ECO:0000304"/>
    <property type="project" value="UniProtKB"/>
</dbReference>
<dbReference type="GO" id="GO:0030901">
    <property type="term" value="P:midbrain development"/>
    <property type="evidence" value="ECO:0000304"/>
    <property type="project" value="UniProtKB"/>
</dbReference>
<dbReference type="GO" id="GO:0045893">
    <property type="term" value="P:positive regulation of DNA-templated transcription"/>
    <property type="evidence" value="ECO:0000250"/>
    <property type="project" value="UniProtKB"/>
</dbReference>
<dbReference type="GO" id="GO:0040019">
    <property type="term" value="P:positive regulation of embryonic development"/>
    <property type="evidence" value="ECO:0000250"/>
    <property type="project" value="UniProtKB"/>
</dbReference>
<dbReference type="GO" id="GO:2000543">
    <property type="term" value="P:positive regulation of gastrulation"/>
    <property type="evidence" value="ECO:0000250"/>
    <property type="project" value="UniProtKB"/>
</dbReference>
<dbReference type="GO" id="GO:0045944">
    <property type="term" value="P:positive regulation of transcription by RNA polymerase II"/>
    <property type="evidence" value="ECO:0000314"/>
    <property type="project" value="UniProtKB"/>
</dbReference>
<dbReference type="GO" id="GO:0090009">
    <property type="term" value="P:primitive streak formation"/>
    <property type="evidence" value="ECO:0000250"/>
    <property type="project" value="UniProtKB"/>
</dbReference>
<dbReference type="GO" id="GO:0065003">
    <property type="term" value="P:protein-containing complex assembly"/>
    <property type="evidence" value="ECO:0000314"/>
    <property type="project" value="UniProtKB"/>
</dbReference>
<dbReference type="GO" id="GO:0040036">
    <property type="term" value="P:regulation of fibroblast growth factor receptor signaling pathway"/>
    <property type="evidence" value="ECO:0000304"/>
    <property type="project" value="UniProtKB"/>
</dbReference>
<dbReference type="GO" id="GO:0008589">
    <property type="term" value="P:regulation of smoothened signaling pathway"/>
    <property type="evidence" value="ECO:0000304"/>
    <property type="project" value="UniProtKB"/>
</dbReference>
<dbReference type="GO" id="GO:0006357">
    <property type="term" value="P:regulation of transcription by RNA polymerase II"/>
    <property type="evidence" value="ECO:0000318"/>
    <property type="project" value="GO_Central"/>
</dbReference>
<dbReference type="CDD" id="cd00086">
    <property type="entry name" value="homeodomain"/>
    <property type="match status" value="1"/>
</dbReference>
<dbReference type="FunFam" id="1.10.10.60:FF:000142">
    <property type="entry name" value="homeobox protein OTX2 isoform X2"/>
    <property type="match status" value="1"/>
</dbReference>
<dbReference type="Gene3D" id="1.10.10.60">
    <property type="entry name" value="Homeodomain-like"/>
    <property type="match status" value="1"/>
</dbReference>
<dbReference type="InterPro" id="IPR001356">
    <property type="entry name" value="HD"/>
</dbReference>
<dbReference type="InterPro" id="IPR017970">
    <property type="entry name" value="Homeobox_CS"/>
</dbReference>
<dbReference type="InterPro" id="IPR009057">
    <property type="entry name" value="Homeodomain-like_sf"/>
</dbReference>
<dbReference type="InterPro" id="IPR003022">
    <property type="entry name" value="Otx2_TF"/>
</dbReference>
<dbReference type="InterPro" id="IPR003025">
    <property type="entry name" value="Otx_TF"/>
</dbReference>
<dbReference type="InterPro" id="IPR013851">
    <property type="entry name" value="Otx_TF_C"/>
</dbReference>
<dbReference type="PANTHER" id="PTHR45793">
    <property type="entry name" value="HOMEOBOX PROTEIN"/>
    <property type="match status" value="1"/>
</dbReference>
<dbReference type="PANTHER" id="PTHR45793:SF2">
    <property type="entry name" value="HOMEOBOX PROTEIN OTX2"/>
    <property type="match status" value="1"/>
</dbReference>
<dbReference type="Pfam" id="PF00046">
    <property type="entry name" value="Homeodomain"/>
    <property type="match status" value="1"/>
</dbReference>
<dbReference type="Pfam" id="PF03529">
    <property type="entry name" value="TF_Otx"/>
    <property type="match status" value="1"/>
</dbReference>
<dbReference type="PRINTS" id="PR01257">
    <property type="entry name" value="OTX2HOMEOBOX"/>
</dbReference>
<dbReference type="PRINTS" id="PR01255">
    <property type="entry name" value="OTXHOMEOBOX"/>
</dbReference>
<dbReference type="SMART" id="SM00389">
    <property type="entry name" value="HOX"/>
    <property type="match status" value="1"/>
</dbReference>
<dbReference type="SUPFAM" id="SSF46689">
    <property type="entry name" value="Homeodomain-like"/>
    <property type="match status" value="1"/>
</dbReference>
<dbReference type="PROSITE" id="PS00027">
    <property type="entry name" value="HOMEOBOX_1"/>
    <property type="match status" value="1"/>
</dbReference>
<dbReference type="PROSITE" id="PS50071">
    <property type="entry name" value="HOMEOBOX_2"/>
    <property type="match status" value="1"/>
</dbReference>
<evidence type="ECO:0000255" key="1">
    <source>
        <dbReference type="PROSITE-ProRule" id="PRU00108"/>
    </source>
</evidence>
<evidence type="ECO:0000256" key="2">
    <source>
        <dbReference type="SAM" id="MobiDB-lite"/>
    </source>
</evidence>
<evidence type="ECO:0000269" key="3">
    <source>
    </source>
</evidence>
<evidence type="ECO:0000269" key="4">
    <source>
    </source>
</evidence>
<evidence type="ECO:0000269" key="5">
    <source>
    </source>
</evidence>
<evidence type="ECO:0000269" key="6">
    <source>
    </source>
</evidence>
<evidence type="ECO:0000269" key="7">
    <source>
    </source>
</evidence>
<evidence type="ECO:0000269" key="8">
    <source>
    </source>
</evidence>
<evidence type="ECO:0000269" key="9">
    <source>
    </source>
</evidence>
<evidence type="ECO:0000269" key="10">
    <source>
    </source>
</evidence>
<evidence type="ECO:0000269" key="11">
    <source>
    </source>
</evidence>
<evidence type="ECO:0000303" key="12">
    <source>
    </source>
</evidence>
<evidence type="ECO:0000303" key="13">
    <source>
    </source>
</evidence>
<evidence type="ECO:0000305" key="14"/>
<feature type="chain" id="PRO_0000049210" description="Homeobox protein OTX2">
    <location>
        <begin position="1"/>
        <end position="289"/>
    </location>
</feature>
<feature type="DNA-binding region" description="Homeobox" evidence="1">
    <location>
        <begin position="38"/>
        <end position="97"/>
    </location>
</feature>
<feature type="region of interest" description="Disordered" evidence="2">
    <location>
        <begin position="93"/>
        <end position="143"/>
    </location>
</feature>
<feature type="compositionally biased region" description="Low complexity" evidence="2">
    <location>
        <begin position="95"/>
        <end position="106"/>
    </location>
</feature>
<feature type="compositionally biased region" description="Polar residues" evidence="2">
    <location>
        <begin position="123"/>
        <end position="132"/>
    </location>
</feature>
<feature type="compositionally biased region" description="Low complexity" evidence="2">
    <location>
        <begin position="133"/>
        <end position="143"/>
    </location>
</feature>
<feature type="splice variant" id="VSP_021006" description="In isoform 2." evidence="12 13">
    <original>P</original>
    <variation>PGPWASCPA</variation>
    <location>
        <position position="32"/>
    </location>
</feature>
<feature type="sequence variant" id="VAR_073793" description="In RDEOP; dbSNP:rs786205224." evidence="11">
    <original>E</original>
    <variation>K</variation>
    <location>
        <position position="79"/>
    </location>
</feature>
<feature type="sequence variant" id="VAR_029354" description="In MCOPS5; dbSNP:rs104894464." evidence="3">
    <original>R</original>
    <variation>G</variation>
    <location>
        <position position="89"/>
    </location>
</feature>
<feature type="sequence variant" id="VAR_065952" description="In MCOPS5; does not affect the expression or nuclear localization of the protein but inhibits its DNA-binding activity as well as its transactivation capability; the protein is non-functional." evidence="7">
    <original>R</original>
    <variation>S</variation>
    <location>
        <position position="90"/>
    </location>
</feature>
<feature type="sequence variant" id="VAR_029355" description="In MCOPS5; dbSNP:rs376333965." evidence="3">
    <original>P</original>
    <variation>T</variation>
    <location>
        <position position="133"/>
    </location>
</feature>
<feature type="sequence variant" id="VAR_029356" description="In MCOPS5; dbSNP:rs753783256." evidence="3">
    <original>P</original>
    <variation>A</variation>
    <location>
        <position position="134"/>
    </location>
</feature>
<feature type="sequence variant" id="VAR_078446" description="In CPHD6; uncertain significance; loss of transcriptional activity, when tested on bicoid binding sites; decreases transactivation mediated by the wild-type protein, when tested on bicoid binding sites; no effect on DNA-binding; dbSNP:rs199761861." evidence="9">
    <original>P</original>
    <variation>R</variation>
    <location>
        <position position="134"/>
    </location>
</feature>
<feature type="sequence variant" id="VAR_065953" description="In CPHD6; acts as a dominant inhibitor of the HESX1 gene; dbSNP:rs370761964." evidence="4">
    <original>N</original>
    <variation>S</variation>
    <location>
        <position position="225"/>
    </location>
</feature>
<gene>
    <name type="primary">OTX2</name>
</gene>
<sequence length="289" mass="31636">MMSYLKQPPYAVNGLSLTTSGMDLLHPSVGYPATPRKQRRERTTFTRAQLDVLEALFAKTRYPDIFMREEVALKINLPESRVQVWFKNRRAKCRQQQQQQQNGGQNKVRPAKKKTSPAREVSSESGTSGQFTPPSSTSVPTIASSSAPVSIWSPASISPLSDPLSTSSSCMQRSYPMTYTQASGYSQGYAGSTSYFGGMDCGSYLTPMHHQLPGPGATLSPMGTNAVTSHLNQSPASLSTQGYGASSLGFNSTTDCLDYKDQTASWKLNFNADCLDYKDQTSSWKFQVL</sequence>
<comment type="function">
    <text evidence="9">Transcription factor probably involved in the development of the brain and the sense organs. Can bind to the bicoid/BCD target sequence (BTS): 5'-TCTAATCCC-3'.</text>
</comment>
<comment type="interaction">
    <interactant intactId="EBI-9087860">
        <id>P32243-2</id>
    </interactant>
    <interactant intactId="EBI-9116154">
        <id>Q96FT7</id>
        <label>ASIC4</label>
    </interactant>
    <organismsDiffer>false</organismsDiffer>
    <experiments>3</experiments>
</comment>
<comment type="interaction">
    <interactant intactId="EBI-9087860">
        <id>P32243-2</id>
    </interactant>
    <interactant intactId="EBI-12941272">
        <id>Q96LB4-4</id>
        <label>ATP6V1G3</label>
    </interactant>
    <organismsDiffer>false</organismsDiffer>
    <experiments>3</experiments>
</comment>
<comment type="interaction">
    <interactant intactId="EBI-9087860">
        <id>P32243-2</id>
    </interactant>
    <interactant intactId="EBI-930964">
        <id>P54253</id>
        <label>ATXN1</label>
    </interactant>
    <organismsDiffer>false</organismsDiffer>
    <experiments>3</experiments>
</comment>
<comment type="interaction">
    <interactant intactId="EBI-9087860">
        <id>P32243-2</id>
    </interactant>
    <interactant intactId="EBI-3926851">
        <id>Q9UQB9</id>
        <label>AURKC</label>
    </interactant>
    <organismsDiffer>false</organismsDiffer>
    <experiments>4</experiments>
</comment>
<comment type="interaction">
    <interactant intactId="EBI-9087860">
        <id>P32243-2</id>
    </interactant>
    <interactant intactId="EBI-1042940">
        <id>Q8NHY0</id>
        <label>B4GALNT2</label>
    </interactant>
    <organismsDiffer>false</organismsDiffer>
    <experiments>3</experiments>
</comment>
<comment type="interaction">
    <interactant intactId="EBI-9087860">
        <id>P32243-2</id>
    </interactant>
    <interactant intactId="EBI-752094">
        <id>Q12982</id>
        <label>BNIP2</label>
    </interactant>
    <organismsDiffer>false</organismsDiffer>
    <experiments>3</experiments>
</comment>
<comment type="interaction">
    <interactant intactId="EBI-9087860">
        <id>P32243-2</id>
    </interactant>
    <interactant intactId="EBI-1245761">
        <id>Q00526</id>
        <label>CDK3</label>
    </interactant>
    <organismsDiffer>false</organismsDiffer>
    <experiments>3</experiments>
</comment>
<comment type="interaction">
    <interactant intactId="EBI-9087860">
        <id>P32243-2</id>
    </interactant>
    <interactant intactId="EBI-356015">
        <id>Q14204</id>
        <label>DYNC1H1</label>
    </interactant>
    <organismsDiffer>false</organismsDiffer>
    <experiments>3</experiments>
</comment>
<comment type="interaction">
    <interactant intactId="EBI-9087860">
        <id>P32243-2</id>
    </interactant>
    <interactant intactId="EBI-1751869">
        <id>Q9Y5Y3</id>
        <label>GPR45</label>
    </interactant>
    <organismsDiffer>false</organismsDiffer>
    <experiments>3</experiments>
</comment>
<comment type="interaction">
    <interactant intactId="EBI-9087860">
        <id>P32243-2</id>
    </interactant>
    <interactant intactId="EBI-12896859">
        <id>Q9UMX6</id>
        <label>GUCA1B</label>
    </interactant>
    <organismsDiffer>false</organismsDiffer>
    <experiments>3</experiments>
</comment>
<comment type="interaction">
    <interactant intactId="EBI-9087860">
        <id>P32243-2</id>
    </interactant>
    <interactant intactId="EBI-6137602">
        <id>Q53FT3</id>
        <label>HIKESHI</label>
    </interactant>
    <organismsDiffer>false</organismsDiffer>
    <experiments>3</experiments>
</comment>
<comment type="interaction">
    <interactant intactId="EBI-9087860">
        <id>P32243-2</id>
    </interactant>
    <interactant intactId="EBI-2798841">
        <id>P35680</id>
        <label>HNF1B</label>
    </interactant>
    <organismsDiffer>false</organismsDiffer>
    <experiments>3</experiments>
</comment>
<comment type="interaction">
    <interactant intactId="EBI-9087860">
        <id>P32243-2</id>
    </interactant>
    <interactant intactId="EBI-748420">
        <id>Q9NSC5</id>
        <label>HOMER3</label>
    </interactant>
    <organismsDiffer>false</organismsDiffer>
    <experiments>3</experiments>
</comment>
<comment type="interaction">
    <interactant intactId="EBI-9087860">
        <id>P32243-2</id>
    </interactant>
    <interactant intactId="EBI-3918847">
        <id>Q9H2F3</id>
        <label>HSD3B7</label>
    </interactant>
    <organismsDiffer>false</organismsDiffer>
    <experiments>3</experiments>
</comment>
<comment type="interaction">
    <interactant intactId="EBI-9087860">
        <id>P32243-2</id>
    </interactant>
    <interactant intactId="EBI-297509">
        <id>P46940</id>
        <label>IQGAP1</label>
    </interactant>
    <organismsDiffer>false</organismsDiffer>
    <experiments>3</experiments>
</comment>
<comment type="interaction">
    <interactant intactId="EBI-9087860">
        <id>P32243-2</id>
    </interactant>
    <interactant intactId="EBI-720411">
        <id>Q9UK76</id>
        <label>JPT1</label>
    </interactant>
    <organismsDiffer>false</organismsDiffer>
    <experiments>3</experiments>
</comment>
<comment type="interaction">
    <interactant intactId="EBI-9087860">
        <id>P32243-2</id>
    </interactant>
    <interactant intactId="EBI-8472267">
        <id>P57682</id>
        <label>KLF3</label>
    </interactant>
    <organismsDiffer>false</organismsDiffer>
    <experiments>3</experiments>
</comment>
<comment type="interaction">
    <interactant intactId="EBI-9087860">
        <id>P32243-2</id>
    </interactant>
    <interactant intactId="EBI-748182">
        <id>Q8TC57</id>
        <label>M1AP</label>
    </interactant>
    <organismsDiffer>false</organismsDiffer>
    <experiments>3</experiments>
</comment>
<comment type="interaction">
    <interactant intactId="EBI-9087860">
        <id>P32243-2</id>
    </interactant>
    <interactant intactId="EBI-1052523">
        <id>Q9GZZ1</id>
        <label>NAA50</label>
    </interactant>
    <organismsDiffer>false</organismsDiffer>
    <experiments>3</experiments>
</comment>
<comment type="interaction">
    <interactant intactId="EBI-9087860">
        <id>P32243-2</id>
    </interactant>
    <interactant intactId="EBI-13080292">
        <id>Q8NH93</id>
        <label>OR1L3</label>
    </interactant>
    <organismsDiffer>false</organismsDiffer>
    <experiments>3</experiments>
</comment>
<comment type="interaction">
    <interactant intactId="EBI-9087860">
        <id>P32243-2</id>
    </interactant>
    <interactant intactId="EBI-12905112">
        <id>Q96RD1</id>
        <label>OR6C1</label>
    </interactant>
    <organismsDiffer>false</organismsDiffer>
    <experiments>3</experiments>
</comment>
<comment type="interaction">
    <interactant intactId="EBI-9087860">
        <id>P32243-2</id>
    </interactant>
    <interactant intactId="EBI-1307">
        <id>Q13153</id>
        <label>PAK1</label>
    </interactant>
    <organismsDiffer>false</organismsDiffer>
    <experiments>3</experiments>
</comment>
<comment type="interaction">
    <interactant intactId="EBI-9087860">
        <id>P32243-2</id>
    </interactant>
    <interactant intactId="EBI-10276663">
        <id>Q8WUT1</id>
        <label>POLDIP3</label>
    </interactant>
    <organismsDiffer>false</organismsDiffer>
    <experiments>3</experiments>
</comment>
<comment type="interaction">
    <interactant intactId="EBI-9087860">
        <id>P32243-2</id>
    </interactant>
    <interactant intactId="EBI-2823850">
        <id>A0AV96</id>
        <label>RBM47</label>
    </interactant>
    <organismsDiffer>false</organismsDiffer>
    <experiments>3</experiments>
</comment>
<comment type="interaction">
    <interactant intactId="EBI-9087860">
        <id>P32243-2</id>
    </interactant>
    <interactant intactId="EBI-13063024">
        <id>Q8TAA1</id>
        <label>RNASE11</label>
    </interactant>
    <organismsDiffer>false</organismsDiffer>
    <experiments>3</experiments>
</comment>
<comment type="interaction">
    <interactant intactId="EBI-9087860">
        <id>P32243-2</id>
    </interactant>
    <interactant intactId="EBI-353438">
        <id>P62854</id>
        <label>RPS26</label>
    </interactant>
    <organismsDiffer>false</organismsDiffer>
    <experiments>3</experiments>
</comment>
<comment type="interaction">
    <interactant intactId="EBI-9087860">
        <id>P32243-2</id>
    </interactant>
    <interactant intactId="EBI-12886464">
        <id>O00442-2</id>
        <label>RTCA</label>
    </interactant>
    <organismsDiffer>false</organismsDiffer>
    <experiments>3</experiments>
</comment>
<comment type="interaction">
    <interactant intactId="EBI-9087860">
        <id>P32243-2</id>
    </interactant>
    <interactant intactId="EBI-607085">
        <id>P09012</id>
        <label>SNRPA</label>
    </interactant>
    <organismsDiffer>false</organismsDiffer>
    <experiments>3</experiments>
</comment>
<comment type="interaction">
    <interactant intactId="EBI-9087860">
        <id>P32243-2</id>
    </interactant>
    <interactant intactId="EBI-10244795">
        <id>Q5QJ74</id>
        <label>TBCEL</label>
    </interactant>
    <organismsDiffer>false</organismsDiffer>
    <experiments>3</experiments>
</comment>
<comment type="interaction">
    <interactant intactId="EBI-9087860">
        <id>P32243-2</id>
    </interactant>
    <interactant intactId="EBI-752030">
        <id>Q96A09</id>
        <label>TENT5B</label>
    </interactant>
    <organismsDiffer>false</organismsDiffer>
    <experiments>3</experiments>
</comment>
<comment type="interaction">
    <interactant intactId="EBI-9087860">
        <id>P32243-2</id>
    </interactant>
    <interactant intactId="EBI-723946">
        <id>P17152</id>
        <label>TMEM11</label>
    </interactant>
    <organismsDiffer>false</organismsDiffer>
    <experiments>3</experiments>
</comment>
<comment type="interaction">
    <interactant intactId="EBI-9087860">
        <id>P32243-2</id>
    </interactant>
    <interactant intactId="EBI-12076664">
        <id>O14787-2</id>
        <label>TNPO2</label>
    </interactant>
    <organismsDiffer>false</organismsDiffer>
    <experiments>3</experiments>
</comment>
<comment type="interaction">
    <interactant intactId="EBI-9087860">
        <id>P32243-2</id>
    </interactant>
    <interactant intactId="EBI-3923391">
        <id>Q6PF06</id>
        <label>TRMT10B</label>
    </interactant>
    <organismsDiffer>false</organismsDiffer>
    <experiments>3</experiments>
</comment>
<comment type="interaction">
    <interactant intactId="EBI-9087860">
        <id>P32243-2</id>
    </interactant>
    <interactant intactId="EBI-742550">
        <id>Q96K80</id>
        <label>ZC3H10</label>
    </interactant>
    <organismsDiffer>false</organismsDiffer>
    <experiments>3</experiments>
</comment>
<comment type="interaction">
    <interactant intactId="EBI-9087860">
        <id>P32243-2</id>
    </interactant>
    <interactant intactId="EBI-12834294">
        <id>Q7L2R6-2</id>
        <label>ZNF765</label>
    </interactant>
    <organismsDiffer>false</organismsDiffer>
    <experiments>3</experiments>
</comment>
<comment type="interaction">
    <interactant intactId="EBI-9087860">
        <id>P32243-2</id>
    </interactant>
    <interactant intactId="EBI-347522">
        <id>O43257</id>
        <label>ZNHIT1</label>
    </interactant>
    <organismsDiffer>false</organismsDiffer>
    <experiments>3</experiments>
</comment>
<comment type="subcellular location">
    <subcellularLocation>
        <location evidence="5">Nucleus</location>
    </subcellularLocation>
</comment>
<comment type="alternative products">
    <event type="alternative splicing"/>
    <isoform>
        <id>P32243-1</id>
        <name>1</name>
        <sequence type="displayed"/>
    </isoform>
    <isoform>
        <id>P32243-2</id>
        <name>2</name>
        <sequence type="described" ref="VSP_021006"/>
    </isoform>
</comment>
<comment type="developmental stage">
    <text evidence="3 5">At Carnegie stage (CS) 14, widely expressed throughout the telencephalon and mesencephalon, with a sharp cutoff at the midbrain-hindbrain boundary. At CS16, found in the lamina terminalis and the floor of the telencephalon. At CS16-CS19, in the developing eye, strongly expressed in the retinal pigment epithelium layer and more weakly in the neural retina, not expressed in the optic nerve itself (at protein level). Retinal expression peaks between CS19 and CS21 and decline in older fetuses. At CS22, detected in the choroid plexus, the dorsal thalamus, and the roof of the mesencephalon. In the developing nasal structures, expressed in the olfactory epithelium of the nasal pits at CS18.</text>
</comment>
<comment type="disease" evidence="3 7 8 10">
    <disease id="DI-00763">
        <name>Microphthalmia, syndromic, 5</name>
        <acronym>MCOPS5</acronym>
        <description>Patients manifest unilateral or bilateral microphthalmia/clinical anophthalmia and variable additional features including pituitary dysfunction, coloboma, microcornea, cataract, retinal dystrophy, hypoplasia or agenesis of the optic nerve, agenesis of the corpus callosum, developmental delay, joint laxity, hypotonia, and seizures. Microphthalmia is a disorder of eye formation, ranging from small size of a single eye to complete bilateral absence of ocular tissues (anophthalmia). In many cases, microphthalmia/anophthalmia occurs in association with syndromes that include non-ocular abnormalities.</description>
        <dbReference type="MIM" id="610125"/>
    </disease>
    <text>The disease is caused by variants affecting the gene represented in this entry.</text>
</comment>
<comment type="disease" evidence="4 9">
    <disease id="DI-03174">
        <name>Pituitary hormone deficiency, combined, 6</name>
        <acronym>CPHD6</acronym>
        <description>Combined pituitary hormone deficiency is defined as the impaired production of growth hormone and one or more of the other five anterior pituitary hormones. CPHD6 patients manifest neonatal hypoglycemia, and deficiencies of growth hormone, thyroid-stimulating hormone, luteinizing hormone, follicle stimulating hormone and adrenocorticotropic hormone.</description>
        <dbReference type="MIM" id="613986"/>
    </disease>
    <text>The disease is caused by variants affecting the gene represented in this entry.</text>
</comment>
<comment type="disease" evidence="6 11">
    <disease id="DI-04439">
        <name>Retinal dystrophy, early-onset, with or without pituitary dysfunction</name>
        <acronym>RDEOP</acronym>
        <description>An autosomal dominant ocular disease characterized by pattern dystrophy of the retinal pigment epithelium, and photoreceptor degeneration. Mild developmental anomalies include optic nerve head dysplasia, microcornea, and Rathke's cleft cyst. Some patients manifest pituitary dysfunction.</description>
        <dbReference type="MIM" id="610125"/>
    </disease>
    <text>The disease is caused by variants affecting the gene represented in this entry.</text>
</comment>
<comment type="similarity">
    <text evidence="14">Belongs to the paired homeobox family. Bicoid subfamily.</text>
</comment>
<comment type="online information" name="Atlas of Genetics and Cytogenetics in Oncology and Haematology">
    <link uri="https://atlasgeneticsoncology.org/gene/46429/OTX2"/>
</comment>